<feature type="chain" id="PRO_1000071239" description="S-adenosylmethionine synthase">
    <location>
        <begin position="1"/>
        <end position="399"/>
    </location>
</feature>
<feature type="region of interest" description="Flexible loop" evidence="1">
    <location>
        <begin position="99"/>
        <end position="109"/>
    </location>
</feature>
<feature type="binding site" description="in other chain" evidence="1">
    <location>
        <position position="15"/>
    </location>
    <ligand>
        <name>ATP</name>
        <dbReference type="ChEBI" id="CHEBI:30616"/>
        <note>ligand shared between two neighboring subunits</note>
    </ligand>
</feature>
<feature type="binding site" evidence="1">
    <location>
        <position position="17"/>
    </location>
    <ligand>
        <name>Mg(2+)</name>
        <dbReference type="ChEBI" id="CHEBI:18420"/>
    </ligand>
</feature>
<feature type="binding site" evidence="1">
    <location>
        <position position="43"/>
    </location>
    <ligand>
        <name>K(+)</name>
        <dbReference type="ChEBI" id="CHEBI:29103"/>
    </ligand>
</feature>
<feature type="binding site" description="in other chain" evidence="1">
    <location>
        <position position="56"/>
    </location>
    <ligand>
        <name>L-methionine</name>
        <dbReference type="ChEBI" id="CHEBI:57844"/>
        <note>ligand shared between two neighboring subunits</note>
    </ligand>
</feature>
<feature type="binding site" description="in other chain" evidence="1">
    <location>
        <position position="99"/>
    </location>
    <ligand>
        <name>L-methionine</name>
        <dbReference type="ChEBI" id="CHEBI:57844"/>
        <note>ligand shared between two neighboring subunits</note>
    </ligand>
</feature>
<feature type="binding site" description="in other chain" evidence="1">
    <location>
        <begin position="175"/>
        <end position="177"/>
    </location>
    <ligand>
        <name>ATP</name>
        <dbReference type="ChEBI" id="CHEBI:30616"/>
        <note>ligand shared between two neighboring subunits</note>
    </ligand>
</feature>
<feature type="binding site" description="in other chain" evidence="1">
    <location>
        <begin position="242"/>
        <end position="243"/>
    </location>
    <ligand>
        <name>ATP</name>
        <dbReference type="ChEBI" id="CHEBI:30616"/>
        <note>ligand shared between two neighboring subunits</note>
    </ligand>
</feature>
<feature type="binding site" evidence="1">
    <location>
        <position position="251"/>
    </location>
    <ligand>
        <name>ATP</name>
        <dbReference type="ChEBI" id="CHEBI:30616"/>
        <note>ligand shared between two neighboring subunits</note>
    </ligand>
</feature>
<feature type="binding site" evidence="1">
    <location>
        <position position="251"/>
    </location>
    <ligand>
        <name>L-methionine</name>
        <dbReference type="ChEBI" id="CHEBI:57844"/>
        <note>ligand shared between two neighboring subunits</note>
    </ligand>
</feature>
<feature type="binding site" description="in other chain" evidence="1">
    <location>
        <begin position="257"/>
        <end position="258"/>
    </location>
    <ligand>
        <name>ATP</name>
        <dbReference type="ChEBI" id="CHEBI:30616"/>
        <note>ligand shared between two neighboring subunits</note>
    </ligand>
</feature>
<feature type="binding site" evidence="1">
    <location>
        <position position="274"/>
    </location>
    <ligand>
        <name>ATP</name>
        <dbReference type="ChEBI" id="CHEBI:30616"/>
        <note>ligand shared between two neighboring subunits</note>
    </ligand>
</feature>
<feature type="binding site" evidence="1">
    <location>
        <position position="278"/>
    </location>
    <ligand>
        <name>ATP</name>
        <dbReference type="ChEBI" id="CHEBI:30616"/>
        <note>ligand shared between two neighboring subunits</note>
    </ligand>
</feature>
<feature type="binding site" description="in other chain" evidence="1">
    <location>
        <position position="282"/>
    </location>
    <ligand>
        <name>L-methionine</name>
        <dbReference type="ChEBI" id="CHEBI:57844"/>
        <note>ligand shared between two neighboring subunits</note>
    </ligand>
</feature>
<dbReference type="EC" id="2.5.1.6" evidence="1"/>
<dbReference type="EMBL" id="CP000517">
    <property type="protein sequence ID" value="ABX27608.1"/>
    <property type="molecule type" value="Genomic_DNA"/>
</dbReference>
<dbReference type="RefSeq" id="WP_012212190.1">
    <property type="nucleotide sequence ID" value="NC_010080.1"/>
</dbReference>
<dbReference type="SMR" id="A8YWU7"/>
<dbReference type="KEGG" id="lhe:lhv_1731"/>
<dbReference type="eggNOG" id="COG0192">
    <property type="taxonomic scope" value="Bacteria"/>
</dbReference>
<dbReference type="HOGENOM" id="CLU_041802_1_1_9"/>
<dbReference type="UniPathway" id="UPA00315">
    <property type="reaction ID" value="UER00080"/>
</dbReference>
<dbReference type="Proteomes" id="UP000000790">
    <property type="component" value="Chromosome"/>
</dbReference>
<dbReference type="GO" id="GO:0005737">
    <property type="term" value="C:cytoplasm"/>
    <property type="evidence" value="ECO:0007669"/>
    <property type="project" value="UniProtKB-SubCell"/>
</dbReference>
<dbReference type="GO" id="GO:0005524">
    <property type="term" value="F:ATP binding"/>
    <property type="evidence" value="ECO:0007669"/>
    <property type="project" value="UniProtKB-UniRule"/>
</dbReference>
<dbReference type="GO" id="GO:0000287">
    <property type="term" value="F:magnesium ion binding"/>
    <property type="evidence" value="ECO:0007669"/>
    <property type="project" value="UniProtKB-UniRule"/>
</dbReference>
<dbReference type="GO" id="GO:0004478">
    <property type="term" value="F:methionine adenosyltransferase activity"/>
    <property type="evidence" value="ECO:0007669"/>
    <property type="project" value="UniProtKB-UniRule"/>
</dbReference>
<dbReference type="GO" id="GO:0006730">
    <property type="term" value="P:one-carbon metabolic process"/>
    <property type="evidence" value="ECO:0007669"/>
    <property type="project" value="UniProtKB-KW"/>
</dbReference>
<dbReference type="GO" id="GO:0006556">
    <property type="term" value="P:S-adenosylmethionine biosynthetic process"/>
    <property type="evidence" value="ECO:0007669"/>
    <property type="project" value="UniProtKB-UniRule"/>
</dbReference>
<dbReference type="CDD" id="cd18079">
    <property type="entry name" value="S-AdoMet_synt"/>
    <property type="match status" value="1"/>
</dbReference>
<dbReference type="FunFam" id="3.30.300.10:FF:000003">
    <property type="entry name" value="S-adenosylmethionine synthase"/>
    <property type="match status" value="1"/>
</dbReference>
<dbReference type="Gene3D" id="3.30.300.10">
    <property type="match status" value="3"/>
</dbReference>
<dbReference type="HAMAP" id="MF_00086">
    <property type="entry name" value="S_AdoMet_synth1"/>
    <property type="match status" value="1"/>
</dbReference>
<dbReference type="InterPro" id="IPR022631">
    <property type="entry name" value="ADOMET_SYNTHASE_CS"/>
</dbReference>
<dbReference type="InterPro" id="IPR022630">
    <property type="entry name" value="S-AdoMet_synt_C"/>
</dbReference>
<dbReference type="InterPro" id="IPR022629">
    <property type="entry name" value="S-AdoMet_synt_central"/>
</dbReference>
<dbReference type="InterPro" id="IPR022628">
    <property type="entry name" value="S-AdoMet_synt_N"/>
</dbReference>
<dbReference type="InterPro" id="IPR002133">
    <property type="entry name" value="S-AdoMet_synthetase"/>
</dbReference>
<dbReference type="InterPro" id="IPR022636">
    <property type="entry name" value="S-AdoMet_synthetase_sfam"/>
</dbReference>
<dbReference type="NCBIfam" id="TIGR01034">
    <property type="entry name" value="metK"/>
    <property type="match status" value="1"/>
</dbReference>
<dbReference type="PANTHER" id="PTHR11964">
    <property type="entry name" value="S-ADENOSYLMETHIONINE SYNTHETASE"/>
    <property type="match status" value="1"/>
</dbReference>
<dbReference type="Pfam" id="PF02773">
    <property type="entry name" value="S-AdoMet_synt_C"/>
    <property type="match status" value="1"/>
</dbReference>
<dbReference type="Pfam" id="PF02772">
    <property type="entry name" value="S-AdoMet_synt_M"/>
    <property type="match status" value="1"/>
</dbReference>
<dbReference type="Pfam" id="PF00438">
    <property type="entry name" value="S-AdoMet_synt_N"/>
    <property type="match status" value="1"/>
</dbReference>
<dbReference type="PIRSF" id="PIRSF000497">
    <property type="entry name" value="MAT"/>
    <property type="match status" value="1"/>
</dbReference>
<dbReference type="SUPFAM" id="SSF55973">
    <property type="entry name" value="S-adenosylmethionine synthetase"/>
    <property type="match status" value="3"/>
</dbReference>
<dbReference type="PROSITE" id="PS00376">
    <property type="entry name" value="ADOMET_SYNTHASE_1"/>
    <property type="match status" value="1"/>
</dbReference>
<dbReference type="PROSITE" id="PS00377">
    <property type="entry name" value="ADOMET_SYNTHASE_2"/>
    <property type="match status" value="1"/>
</dbReference>
<proteinExistence type="inferred from homology"/>
<organism>
    <name type="scientific">Lactobacillus helveticus (strain DPC 4571)</name>
    <dbReference type="NCBI Taxonomy" id="405566"/>
    <lineage>
        <taxon>Bacteria</taxon>
        <taxon>Bacillati</taxon>
        <taxon>Bacillota</taxon>
        <taxon>Bacilli</taxon>
        <taxon>Lactobacillales</taxon>
        <taxon>Lactobacillaceae</taxon>
        <taxon>Lactobacillus</taxon>
    </lineage>
</organism>
<gene>
    <name evidence="1" type="primary">metK</name>
    <name type="ordered locus">lhv_1731</name>
</gene>
<name>METK_LACH4</name>
<sequence>MERRLFTSESVSEGHPDKVADQISDAILDAMLEKDPNSHVACETIVTTGMVFVFGEISTNAYVDIQDVVRKTILRIGYDRPELGFDGNNCAVMVDIDEQSPDIAGGVDHSLETRENESDQDELDQIGAGDQGLMFGFAIKETPELMPLPISLAHRLMRRVASLRKDHTLDWLRPDAKAQVTVEYDENNNPLRVDTVVISTQTDAEVSNKEIRRAMIDLVIKEVIPARYLDEKTKFLINPSGRFVIGGPKGDSGLTGRKIIVDTYGGYARHGGGAFSGKDSTKVDRSASYAARYVAKNIVAAGLAYRCEVQLAYAIGVAHPVSIMIDTAGTGKVDDDLLTEAVRHVFDLRPAGIIKMLDLRRPIYEQTAAYGHFGRTDVDLSWEKTDKTQDLLDYIKNNK</sequence>
<keyword id="KW-0067">ATP-binding</keyword>
<keyword id="KW-0963">Cytoplasm</keyword>
<keyword id="KW-0460">Magnesium</keyword>
<keyword id="KW-0479">Metal-binding</keyword>
<keyword id="KW-0547">Nucleotide-binding</keyword>
<keyword id="KW-0554">One-carbon metabolism</keyword>
<keyword id="KW-0630">Potassium</keyword>
<keyword id="KW-0808">Transferase</keyword>
<evidence type="ECO:0000255" key="1">
    <source>
        <dbReference type="HAMAP-Rule" id="MF_00086"/>
    </source>
</evidence>
<protein>
    <recommendedName>
        <fullName evidence="1">S-adenosylmethionine synthase</fullName>
        <shortName evidence="1">AdoMet synthase</shortName>
        <ecNumber evidence="1">2.5.1.6</ecNumber>
    </recommendedName>
    <alternativeName>
        <fullName evidence="1">MAT</fullName>
    </alternativeName>
    <alternativeName>
        <fullName evidence="1">Methionine adenosyltransferase</fullName>
    </alternativeName>
</protein>
<comment type="function">
    <text evidence="1">Catalyzes the formation of S-adenosylmethionine (AdoMet) from methionine and ATP. The overall synthetic reaction is composed of two sequential steps, AdoMet formation and the subsequent tripolyphosphate hydrolysis which occurs prior to release of AdoMet from the enzyme.</text>
</comment>
<comment type="catalytic activity">
    <reaction evidence="1">
        <text>L-methionine + ATP + H2O = S-adenosyl-L-methionine + phosphate + diphosphate</text>
        <dbReference type="Rhea" id="RHEA:21080"/>
        <dbReference type="ChEBI" id="CHEBI:15377"/>
        <dbReference type="ChEBI" id="CHEBI:30616"/>
        <dbReference type="ChEBI" id="CHEBI:33019"/>
        <dbReference type="ChEBI" id="CHEBI:43474"/>
        <dbReference type="ChEBI" id="CHEBI:57844"/>
        <dbReference type="ChEBI" id="CHEBI:59789"/>
        <dbReference type="EC" id="2.5.1.6"/>
    </reaction>
</comment>
<comment type="cofactor">
    <cofactor evidence="1">
        <name>Mg(2+)</name>
        <dbReference type="ChEBI" id="CHEBI:18420"/>
    </cofactor>
    <text evidence="1">Binds 2 divalent ions per subunit.</text>
</comment>
<comment type="cofactor">
    <cofactor evidence="1">
        <name>K(+)</name>
        <dbReference type="ChEBI" id="CHEBI:29103"/>
    </cofactor>
    <text evidence="1">Binds 1 potassium ion per subunit.</text>
</comment>
<comment type="pathway">
    <text evidence="1">Amino-acid biosynthesis; S-adenosyl-L-methionine biosynthesis; S-adenosyl-L-methionine from L-methionine: step 1/1.</text>
</comment>
<comment type="subunit">
    <text evidence="1">Homotetramer; dimer of dimers.</text>
</comment>
<comment type="subcellular location">
    <subcellularLocation>
        <location evidence="1">Cytoplasm</location>
    </subcellularLocation>
</comment>
<comment type="similarity">
    <text evidence="1">Belongs to the AdoMet synthase family.</text>
</comment>
<reference key="1">
    <citation type="journal article" date="2008" name="J. Bacteriol.">
        <title>Genome sequence of Lactobacillus helveticus: an organism distinguished by selective gene loss and IS element expansion.</title>
        <authorList>
            <person name="Callanan M."/>
            <person name="Kaleta P."/>
            <person name="O'Callaghan J."/>
            <person name="O'Sullivan O."/>
            <person name="Jordan K."/>
            <person name="McAuliffe O."/>
            <person name="Sangrador-Vegas A."/>
            <person name="Slattery L."/>
            <person name="Fitzgerald G.F."/>
            <person name="Beresford T."/>
            <person name="Ross R.P."/>
        </authorList>
    </citation>
    <scope>NUCLEOTIDE SEQUENCE [LARGE SCALE GENOMIC DNA]</scope>
    <source>
        <strain>DPC 4571</strain>
    </source>
</reference>
<accession>A8YWU7</accession>